<feature type="chain" id="PRO_1000060829" description="3-hydroxyacyl-[acyl-carrier-protein] dehydratase FabZ">
    <location>
        <begin position="1"/>
        <end position="151"/>
    </location>
</feature>
<feature type="active site" evidence="1">
    <location>
        <position position="54"/>
    </location>
</feature>
<protein>
    <recommendedName>
        <fullName evidence="1">3-hydroxyacyl-[acyl-carrier-protein] dehydratase FabZ</fullName>
        <ecNumber evidence="1">4.2.1.59</ecNumber>
    </recommendedName>
    <alternativeName>
        <fullName evidence="1">(3R)-hydroxymyristoyl-[acyl-carrier-protein] dehydratase</fullName>
        <shortName evidence="1">(3R)-hydroxymyristoyl-ACP dehydrase</shortName>
    </alternativeName>
    <alternativeName>
        <fullName evidence="1">Beta-hydroxyacyl-ACP dehydratase</fullName>
    </alternativeName>
</protein>
<sequence>MTTNTHTLQIEEILELLPHRFPFLLVDRVLDFEEGRFLRAVKNVSVNEPFFQGHFPGKPIFPGVLILEAMAQATGILAFKSVGKLEPGELYYFAGIDEARFKRPVVPGDQMIMEVTFEKTRRGLTRFKGVALVDGKVVCEATMMCARSREA</sequence>
<evidence type="ECO:0000255" key="1">
    <source>
        <dbReference type="HAMAP-Rule" id="MF_00406"/>
    </source>
</evidence>
<keyword id="KW-0963">Cytoplasm</keyword>
<keyword id="KW-0441">Lipid A biosynthesis</keyword>
<keyword id="KW-0444">Lipid biosynthesis</keyword>
<keyword id="KW-0443">Lipid metabolism</keyword>
<keyword id="KW-0456">Lyase</keyword>
<keyword id="KW-1185">Reference proteome</keyword>
<dbReference type="EC" id="4.2.1.59" evidence="1"/>
<dbReference type="EMBL" id="CP000800">
    <property type="protein sequence ID" value="ABV18514.1"/>
    <property type="molecule type" value="Genomic_DNA"/>
</dbReference>
<dbReference type="RefSeq" id="WP_000210739.1">
    <property type="nucleotide sequence ID" value="NC_009801.1"/>
</dbReference>
<dbReference type="SMR" id="A7ZHS0"/>
<dbReference type="GeneID" id="93777245"/>
<dbReference type="KEGG" id="ecw:EcE24377A_0184"/>
<dbReference type="HOGENOM" id="CLU_078912_1_0_6"/>
<dbReference type="Proteomes" id="UP000001122">
    <property type="component" value="Chromosome"/>
</dbReference>
<dbReference type="GO" id="GO:0005737">
    <property type="term" value="C:cytoplasm"/>
    <property type="evidence" value="ECO:0007669"/>
    <property type="project" value="UniProtKB-SubCell"/>
</dbReference>
<dbReference type="GO" id="GO:0016020">
    <property type="term" value="C:membrane"/>
    <property type="evidence" value="ECO:0007669"/>
    <property type="project" value="GOC"/>
</dbReference>
<dbReference type="GO" id="GO:0019171">
    <property type="term" value="F:(3R)-hydroxyacyl-[acyl-carrier-protein] dehydratase activity"/>
    <property type="evidence" value="ECO:0007669"/>
    <property type="project" value="UniProtKB-EC"/>
</dbReference>
<dbReference type="GO" id="GO:0006633">
    <property type="term" value="P:fatty acid biosynthetic process"/>
    <property type="evidence" value="ECO:0007669"/>
    <property type="project" value="UniProtKB-UniRule"/>
</dbReference>
<dbReference type="GO" id="GO:0009245">
    <property type="term" value="P:lipid A biosynthetic process"/>
    <property type="evidence" value="ECO:0007669"/>
    <property type="project" value="UniProtKB-UniRule"/>
</dbReference>
<dbReference type="CDD" id="cd01288">
    <property type="entry name" value="FabZ"/>
    <property type="match status" value="1"/>
</dbReference>
<dbReference type="FunFam" id="3.10.129.10:FF:000001">
    <property type="entry name" value="3-hydroxyacyl-[acyl-carrier-protein] dehydratase FabZ"/>
    <property type="match status" value="1"/>
</dbReference>
<dbReference type="Gene3D" id="3.10.129.10">
    <property type="entry name" value="Hotdog Thioesterase"/>
    <property type="match status" value="1"/>
</dbReference>
<dbReference type="HAMAP" id="MF_00406">
    <property type="entry name" value="FabZ"/>
    <property type="match status" value="1"/>
</dbReference>
<dbReference type="InterPro" id="IPR013114">
    <property type="entry name" value="FabA_FabZ"/>
</dbReference>
<dbReference type="InterPro" id="IPR010084">
    <property type="entry name" value="FabZ"/>
</dbReference>
<dbReference type="InterPro" id="IPR029069">
    <property type="entry name" value="HotDog_dom_sf"/>
</dbReference>
<dbReference type="NCBIfam" id="TIGR01750">
    <property type="entry name" value="fabZ"/>
    <property type="match status" value="1"/>
</dbReference>
<dbReference type="NCBIfam" id="NF000582">
    <property type="entry name" value="PRK00006.1"/>
    <property type="match status" value="1"/>
</dbReference>
<dbReference type="PANTHER" id="PTHR30272">
    <property type="entry name" value="3-HYDROXYACYL-[ACYL-CARRIER-PROTEIN] DEHYDRATASE"/>
    <property type="match status" value="1"/>
</dbReference>
<dbReference type="PANTHER" id="PTHR30272:SF1">
    <property type="entry name" value="3-HYDROXYACYL-[ACYL-CARRIER-PROTEIN] DEHYDRATASE"/>
    <property type="match status" value="1"/>
</dbReference>
<dbReference type="Pfam" id="PF07977">
    <property type="entry name" value="FabA"/>
    <property type="match status" value="1"/>
</dbReference>
<dbReference type="SUPFAM" id="SSF54637">
    <property type="entry name" value="Thioesterase/thiol ester dehydrase-isomerase"/>
    <property type="match status" value="1"/>
</dbReference>
<organism>
    <name type="scientific">Escherichia coli O139:H28 (strain E24377A / ETEC)</name>
    <dbReference type="NCBI Taxonomy" id="331111"/>
    <lineage>
        <taxon>Bacteria</taxon>
        <taxon>Pseudomonadati</taxon>
        <taxon>Pseudomonadota</taxon>
        <taxon>Gammaproteobacteria</taxon>
        <taxon>Enterobacterales</taxon>
        <taxon>Enterobacteriaceae</taxon>
        <taxon>Escherichia</taxon>
    </lineage>
</organism>
<comment type="function">
    <text evidence="1">Involved in unsaturated fatty acids biosynthesis. Catalyzes the dehydration of short chain beta-hydroxyacyl-ACPs and long chain saturated and unsaturated beta-hydroxyacyl-ACPs.</text>
</comment>
<comment type="catalytic activity">
    <reaction evidence="1">
        <text>a (3R)-hydroxyacyl-[ACP] = a (2E)-enoyl-[ACP] + H2O</text>
        <dbReference type="Rhea" id="RHEA:13097"/>
        <dbReference type="Rhea" id="RHEA-COMP:9925"/>
        <dbReference type="Rhea" id="RHEA-COMP:9945"/>
        <dbReference type="ChEBI" id="CHEBI:15377"/>
        <dbReference type="ChEBI" id="CHEBI:78784"/>
        <dbReference type="ChEBI" id="CHEBI:78827"/>
        <dbReference type="EC" id="4.2.1.59"/>
    </reaction>
</comment>
<comment type="subunit">
    <text evidence="1">Oligomer.</text>
</comment>
<comment type="subcellular location">
    <subcellularLocation>
        <location evidence="1">Cytoplasm</location>
    </subcellularLocation>
</comment>
<comment type="PTM">
    <text evidence="1">The N-terminus is blocked.</text>
</comment>
<comment type="similarity">
    <text evidence="1">Belongs to the thioester dehydratase family. FabZ subfamily.</text>
</comment>
<accession>A7ZHS0</accession>
<gene>
    <name evidence="1" type="primary">fabZ</name>
    <name type="ordered locus">EcE24377A_0184</name>
</gene>
<reference key="1">
    <citation type="journal article" date="2008" name="J. Bacteriol.">
        <title>The pangenome structure of Escherichia coli: comparative genomic analysis of E. coli commensal and pathogenic isolates.</title>
        <authorList>
            <person name="Rasko D.A."/>
            <person name="Rosovitz M.J."/>
            <person name="Myers G.S.A."/>
            <person name="Mongodin E.F."/>
            <person name="Fricke W.F."/>
            <person name="Gajer P."/>
            <person name="Crabtree J."/>
            <person name="Sebaihia M."/>
            <person name="Thomson N.R."/>
            <person name="Chaudhuri R."/>
            <person name="Henderson I.R."/>
            <person name="Sperandio V."/>
            <person name="Ravel J."/>
        </authorList>
    </citation>
    <scope>NUCLEOTIDE SEQUENCE [LARGE SCALE GENOMIC DNA]</scope>
    <source>
        <strain>E24377A / ETEC</strain>
    </source>
</reference>
<proteinExistence type="inferred from homology"/>
<name>FABZ_ECO24</name>